<protein>
    <recommendedName>
        <fullName evidence="1">Glycine--tRNA ligase</fullName>
        <ecNumber evidence="1">6.1.1.14</ecNumber>
    </recommendedName>
    <alternativeName>
        <fullName evidence="1">Glycyl-tRNA synthetase</fullName>
        <shortName evidence="1">GlyRS</shortName>
    </alternativeName>
</protein>
<evidence type="ECO:0000255" key="1">
    <source>
        <dbReference type="HAMAP-Rule" id="MF_00253"/>
    </source>
</evidence>
<accession>A3DF15</accession>
<proteinExistence type="inferred from homology"/>
<dbReference type="EC" id="6.1.1.14" evidence="1"/>
<dbReference type="EMBL" id="CP000568">
    <property type="protein sequence ID" value="ABN52544.1"/>
    <property type="molecule type" value="Genomic_DNA"/>
</dbReference>
<dbReference type="RefSeq" id="WP_003516995.1">
    <property type="nucleotide sequence ID" value="NC_009012.1"/>
</dbReference>
<dbReference type="SMR" id="A3DF15"/>
<dbReference type="STRING" id="203119.Cthe_1312"/>
<dbReference type="GeneID" id="35803798"/>
<dbReference type="KEGG" id="cth:Cthe_1312"/>
<dbReference type="eggNOG" id="COG0423">
    <property type="taxonomic scope" value="Bacteria"/>
</dbReference>
<dbReference type="HOGENOM" id="CLU_015515_2_1_9"/>
<dbReference type="OrthoDB" id="9760853at2"/>
<dbReference type="Proteomes" id="UP000002145">
    <property type="component" value="Chromosome"/>
</dbReference>
<dbReference type="GO" id="GO:0005737">
    <property type="term" value="C:cytoplasm"/>
    <property type="evidence" value="ECO:0007669"/>
    <property type="project" value="UniProtKB-SubCell"/>
</dbReference>
<dbReference type="GO" id="GO:0005524">
    <property type="term" value="F:ATP binding"/>
    <property type="evidence" value="ECO:0007669"/>
    <property type="project" value="UniProtKB-UniRule"/>
</dbReference>
<dbReference type="GO" id="GO:0140096">
    <property type="term" value="F:catalytic activity, acting on a protein"/>
    <property type="evidence" value="ECO:0007669"/>
    <property type="project" value="UniProtKB-ARBA"/>
</dbReference>
<dbReference type="GO" id="GO:0004820">
    <property type="term" value="F:glycine-tRNA ligase activity"/>
    <property type="evidence" value="ECO:0000250"/>
    <property type="project" value="UniProtKB"/>
</dbReference>
<dbReference type="GO" id="GO:0046983">
    <property type="term" value="F:protein dimerization activity"/>
    <property type="evidence" value="ECO:0000250"/>
    <property type="project" value="UniProtKB"/>
</dbReference>
<dbReference type="GO" id="GO:0016740">
    <property type="term" value="F:transferase activity"/>
    <property type="evidence" value="ECO:0007669"/>
    <property type="project" value="UniProtKB-ARBA"/>
</dbReference>
<dbReference type="GO" id="GO:0006426">
    <property type="term" value="P:glycyl-tRNA aminoacylation"/>
    <property type="evidence" value="ECO:0007669"/>
    <property type="project" value="UniProtKB-UniRule"/>
</dbReference>
<dbReference type="CDD" id="cd00774">
    <property type="entry name" value="GlyRS-like_core"/>
    <property type="match status" value="1"/>
</dbReference>
<dbReference type="CDD" id="cd00858">
    <property type="entry name" value="GlyRS_anticodon"/>
    <property type="match status" value="1"/>
</dbReference>
<dbReference type="FunFam" id="3.40.50.800:FF:000002">
    <property type="entry name" value="Glycine--tRNA ligase"/>
    <property type="match status" value="1"/>
</dbReference>
<dbReference type="Gene3D" id="3.40.50.800">
    <property type="entry name" value="Anticodon-binding domain"/>
    <property type="match status" value="1"/>
</dbReference>
<dbReference type="Gene3D" id="3.30.930.10">
    <property type="entry name" value="Bira Bifunctional Protein, Domain 2"/>
    <property type="match status" value="1"/>
</dbReference>
<dbReference type="HAMAP" id="MF_00253_B">
    <property type="entry name" value="Gly_tRNA_synth_B"/>
    <property type="match status" value="1"/>
</dbReference>
<dbReference type="InterPro" id="IPR002314">
    <property type="entry name" value="aa-tRNA-synt_IIb"/>
</dbReference>
<dbReference type="InterPro" id="IPR006195">
    <property type="entry name" value="aa-tRNA-synth_II"/>
</dbReference>
<dbReference type="InterPro" id="IPR045864">
    <property type="entry name" value="aa-tRNA-synth_II/BPL/LPL"/>
</dbReference>
<dbReference type="InterPro" id="IPR004154">
    <property type="entry name" value="Anticodon-bd"/>
</dbReference>
<dbReference type="InterPro" id="IPR036621">
    <property type="entry name" value="Anticodon-bd_dom_sf"/>
</dbReference>
<dbReference type="InterPro" id="IPR027031">
    <property type="entry name" value="Gly-tRNA_synthase/POLG2"/>
</dbReference>
<dbReference type="InterPro" id="IPR022961">
    <property type="entry name" value="Gly_tRNA_ligase_bac"/>
</dbReference>
<dbReference type="InterPro" id="IPR033731">
    <property type="entry name" value="GlyRS-like_core"/>
</dbReference>
<dbReference type="InterPro" id="IPR002315">
    <property type="entry name" value="tRNA-synt_gly"/>
</dbReference>
<dbReference type="NCBIfam" id="TIGR00389">
    <property type="entry name" value="glyS_dimeric"/>
    <property type="match status" value="1"/>
</dbReference>
<dbReference type="NCBIfam" id="NF003211">
    <property type="entry name" value="PRK04173.1"/>
    <property type="match status" value="1"/>
</dbReference>
<dbReference type="PANTHER" id="PTHR10745:SF8">
    <property type="entry name" value="DNA POLYMERASE SUBUNIT GAMMA-2, MITOCHONDRIAL"/>
    <property type="match status" value="1"/>
</dbReference>
<dbReference type="PANTHER" id="PTHR10745">
    <property type="entry name" value="GLYCYL-TRNA SYNTHETASE/DNA POLYMERASE SUBUNIT GAMMA-2"/>
    <property type="match status" value="1"/>
</dbReference>
<dbReference type="Pfam" id="PF03129">
    <property type="entry name" value="HGTP_anticodon"/>
    <property type="match status" value="1"/>
</dbReference>
<dbReference type="Pfam" id="PF00587">
    <property type="entry name" value="tRNA-synt_2b"/>
    <property type="match status" value="1"/>
</dbReference>
<dbReference type="PRINTS" id="PR01043">
    <property type="entry name" value="TRNASYNTHGLY"/>
</dbReference>
<dbReference type="SUPFAM" id="SSF52954">
    <property type="entry name" value="Class II aaRS ABD-related"/>
    <property type="match status" value="1"/>
</dbReference>
<dbReference type="SUPFAM" id="SSF55681">
    <property type="entry name" value="Class II aaRS and biotin synthetases"/>
    <property type="match status" value="1"/>
</dbReference>
<dbReference type="PROSITE" id="PS50862">
    <property type="entry name" value="AA_TRNA_LIGASE_II"/>
    <property type="match status" value="1"/>
</dbReference>
<organism>
    <name type="scientific">Acetivibrio thermocellus (strain ATCC 27405 / DSM 1237 / JCM 9322 / NBRC 103400 / NCIMB 10682 / NRRL B-4536 / VPI 7372)</name>
    <name type="common">Clostridium thermocellum</name>
    <dbReference type="NCBI Taxonomy" id="203119"/>
    <lineage>
        <taxon>Bacteria</taxon>
        <taxon>Bacillati</taxon>
        <taxon>Bacillota</taxon>
        <taxon>Clostridia</taxon>
        <taxon>Eubacteriales</taxon>
        <taxon>Oscillospiraceae</taxon>
        <taxon>Acetivibrio</taxon>
    </lineage>
</organism>
<feature type="chain" id="PRO_1000125531" description="Glycine--tRNA ligase">
    <location>
        <begin position="1"/>
        <end position="462"/>
    </location>
</feature>
<feature type="binding site" evidence="1">
    <location>
        <position position="100"/>
    </location>
    <ligand>
        <name>substrate</name>
    </ligand>
</feature>
<feature type="binding site" evidence="1">
    <location>
        <position position="174"/>
    </location>
    <ligand>
        <name>substrate</name>
    </ligand>
</feature>
<feature type="binding site" evidence="1">
    <location>
        <begin position="206"/>
        <end position="208"/>
    </location>
    <ligand>
        <name>ATP</name>
        <dbReference type="ChEBI" id="CHEBI:30616"/>
    </ligand>
</feature>
<feature type="binding site" evidence="1">
    <location>
        <begin position="216"/>
        <end position="221"/>
    </location>
    <ligand>
        <name>ATP</name>
        <dbReference type="ChEBI" id="CHEBI:30616"/>
    </ligand>
</feature>
<feature type="binding site" evidence="1">
    <location>
        <begin position="221"/>
        <end position="225"/>
    </location>
    <ligand>
        <name>substrate</name>
    </ligand>
</feature>
<feature type="binding site" evidence="1">
    <location>
        <begin position="290"/>
        <end position="291"/>
    </location>
    <ligand>
        <name>ATP</name>
        <dbReference type="ChEBI" id="CHEBI:30616"/>
    </ligand>
</feature>
<feature type="binding site" evidence="1">
    <location>
        <begin position="330"/>
        <end position="334"/>
    </location>
    <ligand>
        <name>substrate</name>
    </ligand>
</feature>
<feature type="binding site" evidence="1">
    <location>
        <begin position="334"/>
        <end position="337"/>
    </location>
    <ligand>
        <name>ATP</name>
        <dbReference type="ChEBI" id="CHEBI:30616"/>
    </ligand>
</feature>
<keyword id="KW-0030">Aminoacyl-tRNA synthetase</keyword>
<keyword id="KW-0067">ATP-binding</keyword>
<keyword id="KW-0963">Cytoplasm</keyword>
<keyword id="KW-0436">Ligase</keyword>
<keyword id="KW-0547">Nucleotide-binding</keyword>
<keyword id="KW-0648">Protein biosynthesis</keyword>
<keyword id="KW-1185">Reference proteome</keyword>
<sequence>MEVKKTMEKIVALAKNRGFIYPGSEIYGGLANSWDYGPLGVELKNNIKKAWWKKFVQENPYNVGVDCAILMNPQVWVASGHVGGFSDPLIDCKECKTRHRADKMIEEWNLKNNENVKVDGWSNEMLMNYIREKGVTCPECGGKNFTDIRKFNLMFKTFQGVTEDSKSEIYLRPETAQGIFVNFKNVQRTTRKKIPFGIGQIGKSFRNEITPGNFIFRTREFEQMELEFFCEPGTDLEWFEYWKNFCFNWLLSLNIKKENLRMRDHSKEELSHYSNATTDIEYLFPFGWGELWGIADRTDFDLRQHAEHSKEDLSYFDPNTNRKYIPYCIEPSLGADRVALVFLCDAYDEEEVEEGDIRVVLRFHPAIAPVKIAVLPLSKKLGDEAYKIYEMLIKKYNCEYDETGSIGKRYRRQDEIGTPYCVTFDFDSLNDRCVTVRDRDSMQQVRIKIDELLSYFEGKFDF</sequence>
<name>SYG_ACET2</name>
<gene>
    <name evidence="1" type="primary">glyQS</name>
    <name type="ordered locus">Cthe_1312</name>
</gene>
<comment type="function">
    <text evidence="1">Catalyzes the attachment of glycine to tRNA(Gly).</text>
</comment>
<comment type="catalytic activity">
    <reaction evidence="1">
        <text>tRNA(Gly) + glycine + ATP = glycyl-tRNA(Gly) + AMP + diphosphate</text>
        <dbReference type="Rhea" id="RHEA:16013"/>
        <dbReference type="Rhea" id="RHEA-COMP:9664"/>
        <dbReference type="Rhea" id="RHEA-COMP:9683"/>
        <dbReference type="ChEBI" id="CHEBI:30616"/>
        <dbReference type="ChEBI" id="CHEBI:33019"/>
        <dbReference type="ChEBI" id="CHEBI:57305"/>
        <dbReference type="ChEBI" id="CHEBI:78442"/>
        <dbReference type="ChEBI" id="CHEBI:78522"/>
        <dbReference type="ChEBI" id="CHEBI:456215"/>
        <dbReference type="EC" id="6.1.1.14"/>
    </reaction>
</comment>
<comment type="subunit">
    <text evidence="1">Homodimer.</text>
</comment>
<comment type="subcellular location">
    <subcellularLocation>
        <location evidence="1">Cytoplasm</location>
    </subcellularLocation>
</comment>
<comment type="similarity">
    <text evidence="1">Belongs to the class-II aminoacyl-tRNA synthetase family.</text>
</comment>
<reference key="1">
    <citation type="submission" date="2007-02" db="EMBL/GenBank/DDBJ databases">
        <title>Complete sequence of Clostridium thermocellum ATCC 27405.</title>
        <authorList>
            <consortium name="US DOE Joint Genome Institute"/>
            <person name="Copeland A."/>
            <person name="Lucas S."/>
            <person name="Lapidus A."/>
            <person name="Barry K."/>
            <person name="Detter J.C."/>
            <person name="Glavina del Rio T."/>
            <person name="Hammon N."/>
            <person name="Israni S."/>
            <person name="Dalin E."/>
            <person name="Tice H."/>
            <person name="Pitluck S."/>
            <person name="Chertkov O."/>
            <person name="Brettin T."/>
            <person name="Bruce D."/>
            <person name="Han C."/>
            <person name="Tapia R."/>
            <person name="Gilna P."/>
            <person name="Schmutz J."/>
            <person name="Larimer F."/>
            <person name="Land M."/>
            <person name="Hauser L."/>
            <person name="Kyrpides N."/>
            <person name="Mikhailova N."/>
            <person name="Wu J.H.D."/>
            <person name="Newcomb M."/>
            <person name="Richardson P."/>
        </authorList>
    </citation>
    <scope>NUCLEOTIDE SEQUENCE [LARGE SCALE GENOMIC DNA]</scope>
    <source>
        <strain>ATCC 27405 / DSM 1237 / JCM 9322 / NBRC 103400 / NCIMB 10682 / NRRL B-4536 / VPI 7372</strain>
    </source>
</reference>